<keyword id="KW-0051">Antiviral defense</keyword>
<keyword id="KW-0238">DNA-binding</keyword>
<keyword id="KW-0255">Endonuclease</keyword>
<keyword id="KW-0378">Hydrolase</keyword>
<keyword id="KW-0460">Magnesium</keyword>
<keyword id="KW-0464">Manganese</keyword>
<keyword id="KW-0479">Metal-binding</keyword>
<keyword id="KW-0540">Nuclease</keyword>
<keyword id="KW-1185">Reference proteome</keyword>
<proteinExistence type="inferred from homology"/>
<accession>B1L400</accession>
<sequence>METTQYGHLLIDGFGVSLRKRRGRILILSKGEKKEIPMKSVKEVVIIGKAALSSELLKALAQSGTDLLIATPTGRPVARLIPAKAGGTARNRYEQYKSLEDRRGIEIARAVIVGKIRNQASNLSYYSKARRMDEELSSELYDAAQQLKREMEELKNEEFPDIDEARKRIMARESKCANIYWEKIASIMEEWKFRGREKRTDLEGNVIDPVNLCLNVCYNLLSAQIWKNVLRFGLDPFLGYLHVERPGRISLVYDLMEPFRPMVDRFVFSYLRGMSPSLFSSNIVSGTIASLRSRFFSDFMNWRLDYKGRKLGMETIMFLYVRDIVSFLRGGKEPTMPYIPW</sequence>
<comment type="function">
    <text evidence="1">CRISPR (clustered regularly interspaced short palindromic repeat), is an adaptive immune system that provides protection against mobile genetic elements (viruses, transposable elements and conjugative plasmids). CRISPR clusters contain spacers, sequences complementary to antecedent mobile elements, and target invading nucleic acids. CRISPR clusters are transcribed and processed into CRISPR RNA (crRNA). Acts as a dsDNA endonuclease. Involved in the integration of spacer DNA into the CRISPR cassette.</text>
</comment>
<comment type="cofactor">
    <cofactor evidence="1">
        <name>Mg(2+)</name>
        <dbReference type="ChEBI" id="CHEBI:18420"/>
    </cofactor>
    <cofactor evidence="1">
        <name>Mn(2+)</name>
        <dbReference type="ChEBI" id="CHEBI:29035"/>
    </cofactor>
</comment>
<comment type="subunit">
    <text evidence="1">Homodimer, forms a heterotetramer with a Cas2 homodimer.</text>
</comment>
<comment type="similarity">
    <text evidence="1">Belongs to the CRISPR-associated endonuclease Cas1 family.</text>
</comment>
<organism>
    <name type="scientific">Korarchaeum cryptofilum (strain OPF8)</name>
    <dbReference type="NCBI Taxonomy" id="374847"/>
    <lineage>
        <taxon>Archaea</taxon>
        <taxon>Thermoproteota</taxon>
        <taxon>Candidatus Korarchaeia</taxon>
        <taxon>Candidatus Korarchaeales</taxon>
        <taxon>Candidatus Korarchaeaceae</taxon>
        <taxon>Candidatus Korarchaeum</taxon>
    </lineage>
</organism>
<name>CAS1_KORCO</name>
<gene>
    <name evidence="1" type="primary">cas1</name>
    <name type="ordered locus">Kcr_0423</name>
</gene>
<feature type="chain" id="PRO_0000417096" description="CRISPR-associated endonuclease Cas1">
    <location>
        <begin position="1"/>
        <end position="341"/>
    </location>
</feature>
<feature type="binding site" evidence="1">
    <location>
        <position position="173"/>
    </location>
    <ligand>
        <name>Mn(2+)</name>
        <dbReference type="ChEBI" id="CHEBI:29035"/>
    </ligand>
</feature>
<feature type="binding site" evidence="1">
    <location>
        <position position="242"/>
    </location>
    <ligand>
        <name>Mn(2+)</name>
        <dbReference type="ChEBI" id="CHEBI:29035"/>
    </ligand>
</feature>
<feature type="binding site" evidence="1">
    <location>
        <position position="257"/>
    </location>
    <ligand>
        <name>Mn(2+)</name>
        <dbReference type="ChEBI" id="CHEBI:29035"/>
    </ligand>
</feature>
<dbReference type="EC" id="3.1.-.-" evidence="1"/>
<dbReference type="EMBL" id="CP000968">
    <property type="protein sequence ID" value="ACB07179.1"/>
    <property type="molecule type" value="Genomic_DNA"/>
</dbReference>
<dbReference type="RefSeq" id="WP_012309076.1">
    <property type="nucleotide sequence ID" value="NC_010482.1"/>
</dbReference>
<dbReference type="SMR" id="B1L400"/>
<dbReference type="STRING" id="374847.Kcr_0423"/>
<dbReference type="EnsemblBacteria" id="ACB07179">
    <property type="protein sequence ID" value="ACB07179"/>
    <property type="gene ID" value="Kcr_0423"/>
</dbReference>
<dbReference type="GeneID" id="6093710"/>
<dbReference type="KEGG" id="kcr:Kcr_0423"/>
<dbReference type="eggNOG" id="arCOG01452">
    <property type="taxonomic scope" value="Archaea"/>
</dbReference>
<dbReference type="HOGENOM" id="CLU_052779_0_0_2"/>
<dbReference type="InParanoid" id="B1L400"/>
<dbReference type="OrthoDB" id="2216at2157"/>
<dbReference type="PhylomeDB" id="B1L400"/>
<dbReference type="Proteomes" id="UP000001686">
    <property type="component" value="Chromosome"/>
</dbReference>
<dbReference type="GO" id="GO:0003677">
    <property type="term" value="F:DNA binding"/>
    <property type="evidence" value="ECO:0007669"/>
    <property type="project" value="UniProtKB-KW"/>
</dbReference>
<dbReference type="GO" id="GO:0004519">
    <property type="term" value="F:endonuclease activity"/>
    <property type="evidence" value="ECO:0000318"/>
    <property type="project" value="GO_Central"/>
</dbReference>
<dbReference type="GO" id="GO:0046872">
    <property type="term" value="F:metal ion binding"/>
    <property type="evidence" value="ECO:0007669"/>
    <property type="project" value="UniProtKB-UniRule"/>
</dbReference>
<dbReference type="GO" id="GO:0099048">
    <property type="term" value="P:CRISPR-cas system"/>
    <property type="evidence" value="ECO:0000318"/>
    <property type="project" value="GO_Central"/>
</dbReference>
<dbReference type="GO" id="GO:0051607">
    <property type="term" value="P:defense response to virus"/>
    <property type="evidence" value="ECO:0007669"/>
    <property type="project" value="UniProtKB-UniRule"/>
</dbReference>
<dbReference type="GO" id="GO:0043571">
    <property type="term" value="P:maintenance of CRISPR repeat elements"/>
    <property type="evidence" value="ECO:0000318"/>
    <property type="project" value="GO_Central"/>
</dbReference>
<dbReference type="CDD" id="cd09634">
    <property type="entry name" value="Cas1_I-II-III"/>
    <property type="match status" value="1"/>
</dbReference>
<dbReference type="Gene3D" id="1.20.120.920">
    <property type="entry name" value="CRISPR-associated endonuclease Cas1, C-terminal domain"/>
    <property type="match status" value="1"/>
</dbReference>
<dbReference type="Gene3D" id="3.100.10.20">
    <property type="entry name" value="CRISPR-associated endonuclease Cas1, N-terminal domain"/>
    <property type="match status" value="1"/>
</dbReference>
<dbReference type="HAMAP" id="MF_01470">
    <property type="entry name" value="Cas1"/>
    <property type="match status" value="1"/>
</dbReference>
<dbReference type="InterPro" id="IPR050646">
    <property type="entry name" value="Cas1"/>
</dbReference>
<dbReference type="InterPro" id="IPR002729">
    <property type="entry name" value="CRISPR-assoc_Cas1"/>
</dbReference>
<dbReference type="InterPro" id="IPR042206">
    <property type="entry name" value="CRISPR-assoc_Cas1_C"/>
</dbReference>
<dbReference type="InterPro" id="IPR042211">
    <property type="entry name" value="CRISPR-assoc_Cas1_N"/>
</dbReference>
<dbReference type="NCBIfam" id="TIGR00287">
    <property type="entry name" value="cas1"/>
    <property type="match status" value="1"/>
</dbReference>
<dbReference type="PANTHER" id="PTHR34353">
    <property type="entry name" value="CRISPR-ASSOCIATED ENDONUCLEASE CAS1 1"/>
    <property type="match status" value="1"/>
</dbReference>
<dbReference type="PANTHER" id="PTHR34353:SF2">
    <property type="entry name" value="CRISPR-ASSOCIATED ENDONUCLEASE CAS1 1"/>
    <property type="match status" value="1"/>
</dbReference>
<dbReference type="Pfam" id="PF01867">
    <property type="entry name" value="Cas_Cas1"/>
    <property type="match status" value="1"/>
</dbReference>
<reference key="1">
    <citation type="journal article" date="2008" name="Proc. Natl. Acad. Sci. U.S.A.">
        <title>A korarchaeal genome reveals new insights into the evolution of the Archaea.</title>
        <authorList>
            <person name="Elkins J.G."/>
            <person name="Podar M."/>
            <person name="Graham D.E."/>
            <person name="Makarova K.S."/>
            <person name="Wolf Y."/>
            <person name="Randau L."/>
            <person name="Hedlund B.P."/>
            <person name="Brochier-Armanet C."/>
            <person name="Kunin V."/>
            <person name="Anderson I."/>
            <person name="Lapidus A."/>
            <person name="Goltsman E."/>
            <person name="Barry K."/>
            <person name="Koonin E.V."/>
            <person name="Hugenholtz P."/>
            <person name="Kyrpides N."/>
            <person name="Wanner G."/>
            <person name="Richardson P."/>
            <person name="Keller M."/>
            <person name="Stetter K.O."/>
        </authorList>
    </citation>
    <scope>NUCLEOTIDE SEQUENCE [LARGE SCALE GENOMIC DNA]</scope>
    <source>
        <strain>OPF8</strain>
    </source>
</reference>
<protein>
    <recommendedName>
        <fullName evidence="1">CRISPR-associated endonuclease Cas1</fullName>
        <ecNumber evidence="1">3.1.-.-</ecNumber>
    </recommendedName>
</protein>
<evidence type="ECO:0000255" key="1">
    <source>
        <dbReference type="HAMAP-Rule" id="MF_01470"/>
    </source>
</evidence>